<evidence type="ECO:0000255" key="1">
    <source>
        <dbReference type="HAMAP-Rule" id="MF_00489"/>
    </source>
</evidence>
<comment type="similarity">
    <text evidence="1">Belongs to the UPF0178 family.</text>
</comment>
<proteinExistence type="inferred from homology"/>
<accession>A3QGJ4</accession>
<organism>
    <name type="scientific">Shewanella loihica (strain ATCC BAA-1088 / PV-4)</name>
    <dbReference type="NCBI Taxonomy" id="323850"/>
    <lineage>
        <taxon>Bacteria</taxon>
        <taxon>Pseudomonadati</taxon>
        <taxon>Pseudomonadota</taxon>
        <taxon>Gammaproteobacteria</taxon>
        <taxon>Alteromonadales</taxon>
        <taxon>Shewanellaceae</taxon>
        <taxon>Shewanella</taxon>
    </lineage>
</organism>
<dbReference type="EMBL" id="CP000606">
    <property type="protein sequence ID" value="ABO24592.1"/>
    <property type="molecule type" value="Genomic_DNA"/>
</dbReference>
<dbReference type="RefSeq" id="WP_011866523.1">
    <property type="nucleotide sequence ID" value="NC_009092.1"/>
</dbReference>
<dbReference type="STRING" id="323850.Shew_2726"/>
<dbReference type="KEGG" id="slo:Shew_2726"/>
<dbReference type="eggNOG" id="COG1671">
    <property type="taxonomic scope" value="Bacteria"/>
</dbReference>
<dbReference type="HOGENOM" id="CLU_106619_2_1_6"/>
<dbReference type="OrthoDB" id="9798918at2"/>
<dbReference type="Proteomes" id="UP000001558">
    <property type="component" value="Chromosome"/>
</dbReference>
<dbReference type="CDD" id="cd18720">
    <property type="entry name" value="PIN_YqxD-like"/>
    <property type="match status" value="1"/>
</dbReference>
<dbReference type="HAMAP" id="MF_00489">
    <property type="entry name" value="UPF0178"/>
    <property type="match status" value="1"/>
</dbReference>
<dbReference type="InterPro" id="IPR003791">
    <property type="entry name" value="UPF0178"/>
</dbReference>
<dbReference type="NCBIfam" id="NF001095">
    <property type="entry name" value="PRK00124.1"/>
    <property type="match status" value="1"/>
</dbReference>
<dbReference type="PANTHER" id="PTHR35146">
    <property type="entry name" value="UPF0178 PROTEIN YAII"/>
    <property type="match status" value="1"/>
</dbReference>
<dbReference type="PANTHER" id="PTHR35146:SF1">
    <property type="entry name" value="UPF0178 PROTEIN YAII"/>
    <property type="match status" value="1"/>
</dbReference>
<dbReference type="Pfam" id="PF02639">
    <property type="entry name" value="DUF188"/>
    <property type="match status" value="1"/>
</dbReference>
<protein>
    <recommendedName>
        <fullName evidence="1">UPF0178 protein Shew_2726</fullName>
    </recommendedName>
</protein>
<reference key="1">
    <citation type="submission" date="2007-03" db="EMBL/GenBank/DDBJ databases">
        <title>Complete sequence of Shewanella loihica PV-4.</title>
        <authorList>
            <consortium name="US DOE Joint Genome Institute"/>
            <person name="Copeland A."/>
            <person name="Lucas S."/>
            <person name="Lapidus A."/>
            <person name="Barry K."/>
            <person name="Detter J.C."/>
            <person name="Glavina del Rio T."/>
            <person name="Hammon N."/>
            <person name="Israni S."/>
            <person name="Dalin E."/>
            <person name="Tice H."/>
            <person name="Pitluck S."/>
            <person name="Chain P."/>
            <person name="Malfatti S."/>
            <person name="Shin M."/>
            <person name="Vergez L."/>
            <person name="Schmutz J."/>
            <person name="Larimer F."/>
            <person name="Land M."/>
            <person name="Hauser L."/>
            <person name="Kyrpides N."/>
            <person name="Mikhailova N."/>
            <person name="Romine M.F."/>
            <person name="Serres G."/>
            <person name="Fredrickson J."/>
            <person name="Tiedje J."/>
            <person name="Richardson P."/>
        </authorList>
    </citation>
    <scope>NUCLEOTIDE SEQUENCE [LARGE SCALE GENOMIC DNA]</scope>
    <source>
        <strain>ATCC BAA-1088 / PV-4</strain>
    </source>
</reference>
<name>Y2726_SHELP</name>
<feature type="chain" id="PRO_1000014444" description="UPF0178 protein Shew_2726">
    <location>
        <begin position="1"/>
        <end position="150"/>
    </location>
</feature>
<gene>
    <name type="ordered locus">Shew_2726</name>
</gene>
<keyword id="KW-1185">Reference proteome</keyword>
<sequence>MKIWVDADACPGVIKDILFRAAERAEIAVTLVANHAMRIPPSRFIQLVTVSSGFDVADNEIVRRAAPGDLVITADIPLASEVIDKGALALNPRGELYTEHNIKSILNMRDFMDTMRASGVQTGGPAAIGQSEKQAFGNQLDRLITKYHKR</sequence>